<accession>B8E2P4</accession>
<protein>
    <recommendedName>
        <fullName evidence="1">Probable transcriptional regulatory protein Dtur_1615</fullName>
    </recommendedName>
</protein>
<gene>
    <name type="ordered locus">Dtur_1615</name>
</gene>
<comment type="subcellular location">
    <subcellularLocation>
        <location evidence="1">Cytoplasm</location>
    </subcellularLocation>
</comment>
<comment type="similarity">
    <text evidence="1">Belongs to the TACO1 family.</text>
</comment>
<reference key="1">
    <citation type="journal article" date="2016" name="Front. Microbiol.">
        <title>The complete genome sequence of hyperthermophile Dictyoglomus turgidum DSM 6724 reveals a specialized carbohydrate fermentor.</title>
        <authorList>
            <person name="Brumm P.J."/>
            <person name="Gowda K."/>
            <person name="Robb F.T."/>
            <person name="Mead D.A."/>
        </authorList>
    </citation>
    <scope>NUCLEOTIDE SEQUENCE [LARGE SCALE GENOMIC DNA]</scope>
    <source>
        <strain>DSM 6724 / Z-1310</strain>
    </source>
</reference>
<organism>
    <name type="scientific">Dictyoglomus turgidum (strain DSM 6724 / Z-1310)</name>
    <dbReference type="NCBI Taxonomy" id="515635"/>
    <lineage>
        <taxon>Bacteria</taxon>
        <taxon>Pseudomonadati</taxon>
        <taxon>Dictyoglomota</taxon>
        <taxon>Dictyoglomia</taxon>
        <taxon>Dictyoglomales</taxon>
        <taxon>Dictyoglomaceae</taxon>
        <taxon>Dictyoglomus</taxon>
    </lineage>
</organism>
<feature type="chain" id="PRO_1000132189" description="Probable transcriptional regulatory protein Dtur_1615">
    <location>
        <begin position="1"/>
        <end position="249"/>
    </location>
</feature>
<name>Y1615_DICTD</name>
<sequence length="249" mass="27329">MSGHSKWANIKHRKAAADAKKGKLFSQLSKEIIIAAKHGGGNPETNPRLRAAIERAREANMPKENIEKAIMRGTGEIPGVAYEEVTYEGYGPGGVAIMVEVVTDNKNRTAAEIRRIFTKHGGNLGEAGCVAWIFEEKGSIIIEKESVKDEDQLISDALEAGAEDVQISDDTVEVITSPESFSEVRDILKEKGYKITQAEVTKVPKNLVPVDGPDAEKVLKLMEELEDHDDVQKTYANFDIPDEILQSLS</sequence>
<dbReference type="EMBL" id="CP001251">
    <property type="protein sequence ID" value="ACK42888.1"/>
    <property type="molecule type" value="Genomic_DNA"/>
</dbReference>
<dbReference type="RefSeq" id="WP_012583963.1">
    <property type="nucleotide sequence ID" value="NC_011661.1"/>
</dbReference>
<dbReference type="RefSeq" id="YP_002353502.1">
    <property type="nucleotide sequence ID" value="NC_011661.1"/>
</dbReference>
<dbReference type="SMR" id="B8E2P4"/>
<dbReference type="FunCoup" id="B8E2P4">
    <property type="interactions" value="331"/>
</dbReference>
<dbReference type="STRING" id="515635.Dtur_1615"/>
<dbReference type="EnsemblBacteria" id="ACK42888">
    <property type="protein sequence ID" value="ACK42888"/>
    <property type="gene ID" value="Dtur_1615"/>
</dbReference>
<dbReference type="KEGG" id="dtu:Dtur_1615"/>
<dbReference type="PATRIC" id="fig|515635.4.peg.1664"/>
<dbReference type="eggNOG" id="COG0217">
    <property type="taxonomic scope" value="Bacteria"/>
</dbReference>
<dbReference type="HOGENOM" id="CLU_062974_2_2_0"/>
<dbReference type="InParanoid" id="B8E2P4"/>
<dbReference type="OrthoDB" id="9781053at2"/>
<dbReference type="Proteomes" id="UP000007719">
    <property type="component" value="Chromosome"/>
</dbReference>
<dbReference type="GO" id="GO:0005829">
    <property type="term" value="C:cytosol"/>
    <property type="evidence" value="ECO:0000318"/>
    <property type="project" value="GO_Central"/>
</dbReference>
<dbReference type="GO" id="GO:0003677">
    <property type="term" value="F:DNA binding"/>
    <property type="evidence" value="ECO:0007669"/>
    <property type="project" value="UniProtKB-UniRule"/>
</dbReference>
<dbReference type="GO" id="GO:0006355">
    <property type="term" value="P:regulation of DNA-templated transcription"/>
    <property type="evidence" value="ECO:0007669"/>
    <property type="project" value="UniProtKB-UniRule"/>
</dbReference>
<dbReference type="FunFam" id="1.10.10.200:FF:000002">
    <property type="entry name" value="Probable transcriptional regulatory protein CLM62_37755"/>
    <property type="match status" value="1"/>
</dbReference>
<dbReference type="FunFam" id="3.30.70.980:FF:000002">
    <property type="entry name" value="Probable transcriptional regulatory protein YebC"/>
    <property type="match status" value="1"/>
</dbReference>
<dbReference type="Gene3D" id="1.10.10.200">
    <property type="match status" value="1"/>
</dbReference>
<dbReference type="Gene3D" id="3.30.70.980">
    <property type="match status" value="2"/>
</dbReference>
<dbReference type="HAMAP" id="MF_00693">
    <property type="entry name" value="Transcrip_reg_TACO1"/>
    <property type="match status" value="1"/>
</dbReference>
<dbReference type="InterPro" id="IPR017856">
    <property type="entry name" value="Integrase-like_N"/>
</dbReference>
<dbReference type="InterPro" id="IPR048300">
    <property type="entry name" value="TACO1_YebC-like_2nd/3rd_dom"/>
</dbReference>
<dbReference type="InterPro" id="IPR049083">
    <property type="entry name" value="TACO1_YebC_N"/>
</dbReference>
<dbReference type="InterPro" id="IPR002876">
    <property type="entry name" value="Transcrip_reg_TACO1-like"/>
</dbReference>
<dbReference type="InterPro" id="IPR026564">
    <property type="entry name" value="Transcrip_reg_TACO1-like_dom3"/>
</dbReference>
<dbReference type="InterPro" id="IPR029072">
    <property type="entry name" value="YebC-like"/>
</dbReference>
<dbReference type="NCBIfam" id="NF001030">
    <property type="entry name" value="PRK00110.1"/>
    <property type="match status" value="1"/>
</dbReference>
<dbReference type="NCBIfam" id="NF009044">
    <property type="entry name" value="PRK12378.1"/>
    <property type="match status" value="1"/>
</dbReference>
<dbReference type="NCBIfam" id="TIGR01033">
    <property type="entry name" value="YebC/PmpR family DNA-binding transcriptional regulator"/>
    <property type="match status" value="1"/>
</dbReference>
<dbReference type="PANTHER" id="PTHR12532:SF6">
    <property type="entry name" value="TRANSCRIPTIONAL REGULATORY PROTEIN YEBC-RELATED"/>
    <property type="match status" value="1"/>
</dbReference>
<dbReference type="PANTHER" id="PTHR12532">
    <property type="entry name" value="TRANSLATIONAL ACTIVATOR OF CYTOCHROME C OXIDASE 1"/>
    <property type="match status" value="1"/>
</dbReference>
<dbReference type="Pfam" id="PF20772">
    <property type="entry name" value="TACO1_YebC_N"/>
    <property type="match status" value="1"/>
</dbReference>
<dbReference type="Pfam" id="PF01709">
    <property type="entry name" value="Transcrip_reg"/>
    <property type="match status" value="1"/>
</dbReference>
<dbReference type="SUPFAM" id="SSF75625">
    <property type="entry name" value="YebC-like"/>
    <property type="match status" value="1"/>
</dbReference>
<keyword id="KW-0963">Cytoplasm</keyword>
<keyword id="KW-0238">DNA-binding</keyword>
<keyword id="KW-1185">Reference proteome</keyword>
<keyword id="KW-0804">Transcription</keyword>
<keyword id="KW-0805">Transcription regulation</keyword>
<evidence type="ECO:0000255" key="1">
    <source>
        <dbReference type="HAMAP-Rule" id="MF_00693"/>
    </source>
</evidence>
<proteinExistence type="inferred from homology"/>